<organism>
    <name type="scientific">Schizosaccharomyces pombe (strain 972 / ATCC 24843)</name>
    <name type="common">Fission yeast</name>
    <dbReference type="NCBI Taxonomy" id="284812"/>
    <lineage>
        <taxon>Eukaryota</taxon>
        <taxon>Fungi</taxon>
        <taxon>Dikarya</taxon>
        <taxon>Ascomycota</taxon>
        <taxon>Taphrinomycotina</taxon>
        <taxon>Schizosaccharomycetes</taxon>
        <taxon>Schizosaccharomycetales</taxon>
        <taxon>Schizosaccharomycetaceae</taxon>
        <taxon>Schizosaccharomyces</taxon>
    </lineage>
</organism>
<keyword id="KW-0539">Nucleus</keyword>
<keyword id="KW-1185">Reference proteome</keyword>
<reference key="1">
    <citation type="journal article" date="2002" name="Nature">
        <title>The genome sequence of Schizosaccharomyces pombe.</title>
        <authorList>
            <person name="Wood V."/>
            <person name="Gwilliam R."/>
            <person name="Rajandream M.A."/>
            <person name="Lyne M.H."/>
            <person name="Lyne R."/>
            <person name="Stewart A."/>
            <person name="Sgouros J.G."/>
            <person name="Peat N."/>
            <person name="Hayles J."/>
            <person name="Baker S.G."/>
            <person name="Basham D."/>
            <person name="Bowman S."/>
            <person name="Brooks K."/>
            <person name="Brown D."/>
            <person name="Brown S."/>
            <person name="Chillingworth T."/>
            <person name="Churcher C.M."/>
            <person name="Collins M."/>
            <person name="Connor R."/>
            <person name="Cronin A."/>
            <person name="Davis P."/>
            <person name="Feltwell T."/>
            <person name="Fraser A."/>
            <person name="Gentles S."/>
            <person name="Goble A."/>
            <person name="Hamlin N."/>
            <person name="Harris D.E."/>
            <person name="Hidalgo J."/>
            <person name="Hodgson G."/>
            <person name="Holroyd S."/>
            <person name="Hornsby T."/>
            <person name="Howarth S."/>
            <person name="Huckle E.J."/>
            <person name="Hunt S."/>
            <person name="Jagels K."/>
            <person name="James K.D."/>
            <person name="Jones L."/>
            <person name="Jones M."/>
            <person name="Leather S."/>
            <person name="McDonald S."/>
            <person name="McLean J."/>
            <person name="Mooney P."/>
            <person name="Moule S."/>
            <person name="Mungall K.L."/>
            <person name="Murphy L.D."/>
            <person name="Niblett D."/>
            <person name="Odell C."/>
            <person name="Oliver K."/>
            <person name="O'Neil S."/>
            <person name="Pearson D."/>
            <person name="Quail M.A."/>
            <person name="Rabbinowitsch E."/>
            <person name="Rutherford K.M."/>
            <person name="Rutter S."/>
            <person name="Saunders D."/>
            <person name="Seeger K."/>
            <person name="Sharp S."/>
            <person name="Skelton J."/>
            <person name="Simmonds M.N."/>
            <person name="Squares R."/>
            <person name="Squares S."/>
            <person name="Stevens K."/>
            <person name="Taylor K."/>
            <person name="Taylor R.G."/>
            <person name="Tivey A."/>
            <person name="Walsh S.V."/>
            <person name="Warren T."/>
            <person name="Whitehead S."/>
            <person name="Woodward J.R."/>
            <person name="Volckaert G."/>
            <person name="Aert R."/>
            <person name="Robben J."/>
            <person name="Grymonprez B."/>
            <person name="Weltjens I."/>
            <person name="Vanstreels E."/>
            <person name="Rieger M."/>
            <person name="Schaefer M."/>
            <person name="Mueller-Auer S."/>
            <person name="Gabel C."/>
            <person name="Fuchs M."/>
            <person name="Duesterhoeft A."/>
            <person name="Fritzc C."/>
            <person name="Holzer E."/>
            <person name="Moestl D."/>
            <person name="Hilbert H."/>
            <person name="Borzym K."/>
            <person name="Langer I."/>
            <person name="Beck A."/>
            <person name="Lehrach H."/>
            <person name="Reinhardt R."/>
            <person name="Pohl T.M."/>
            <person name="Eger P."/>
            <person name="Zimmermann W."/>
            <person name="Wedler H."/>
            <person name="Wambutt R."/>
            <person name="Purnelle B."/>
            <person name="Goffeau A."/>
            <person name="Cadieu E."/>
            <person name="Dreano S."/>
            <person name="Gloux S."/>
            <person name="Lelaure V."/>
            <person name="Mottier S."/>
            <person name="Galibert F."/>
            <person name="Aves S.J."/>
            <person name="Xiang Z."/>
            <person name="Hunt C."/>
            <person name="Moore K."/>
            <person name="Hurst S.M."/>
            <person name="Lucas M."/>
            <person name="Rochet M."/>
            <person name="Gaillardin C."/>
            <person name="Tallada V.A."/>
            <person name="Garzon A."/>
            <person name="Thode G."/>
            <person name="Daga R.R."/>
            <person name="Cruzado L."/>
            <person name="Jimenez J."/>
            <person name="Sanchez M."/>
            <person name="del Rey F."/>
            <person name="Benito J."/>
            <person name="Dominguez A."/>
            <person name="Revuelta J.L."/>
            <person name="Moreno S."/>
            <person name="Armstrong J."/>
            <person name="Forsburg S.L."/>
            <person name="Cerutti L."/>
            <person name="Lowe T."/>
            <person name="McCombie W.R."/>
            <person name="Paulsen I."/>
            <person name="Potashkin J."/>
            <person name="Shpakovski G.V."/>
            <person name="Ussery D."/>
            <person name="Barrell B.G."/>
            <person name="Nurse P."/>
        </authorList>
    </citation>
    <scope>NUCLEOTIDE SEQUENCE [LARGE SCALE GENOMIC DNA]</scope>
    <source>
        <strain>972 / ATCC 24843</strain>
    </source>
</reference>
<reference key="2">
    <citation type="journal article" date="2006" name="Nat. Biotechnol.">
        <title>ORFeome cloning and global analysis of protein localization in the fission yeast Schizosaccharomyces pombe.</title>
        <authorList>
            <person name="Matsuyama A."/>
            <person name="Arai R."/>
            <person name="Yashiroda Y."/>
            <person name="Shirai A."/>
            <person name="Kamata A."/>
            <person name="Sekido S."/>
            <person name="Kobayashi Y."/>
            <person name="Hashimoto A."/>
            <person name="Hamamoto M."/>
            <person name="Hiraoka Y."/>
            <person name="Horinouchi S."/>
            <person name="Yoshida M."/>
        </authorList>
    </citation>
    <scope>SUBCELLULAR LOCATION [LARGE SCALE ANALYSIS]</scope>
</reference>
<sequence>MSSARELLRKVKQERLGQKRGLKASSQELKRQKTRDHKSFENLGRDQSRELAVSDFNEKQSTEPPKDTRAVSALPENFFDESIAKNKELIEEEWNDFQNEIGIIEENAVEQEITLQQQQLLAEKDEENEIADNDLEPEVYDILYEEESKLGESRDLIRRLKQKRFETKKNNFSVKESSNLSNNDSDASLDEDTLLWGL</sequence>
<protein>
    <recommendedName>
        <fullName>Uncharacterized protein C645.12c</fullName>
    </recommendedName>
</protein>
<dbReference type="EMBL" id="CU329672">
    <property type="protein sequence ID" value="CAB39908.1"/>
    <property type="molecule type" value="Genomic_DNA"/>
</dbReference>
<dbReference type="PIR" id="T41529">
    <property type="entry name" value="T41529"/>
</dbReference>
<dbReference type="RefSeq" id="NP_588121.1">
    <property type="nucleotide sequence ID" value="NM_001023111.2"/>
</dbReference>
<dbReference type="SMR" id="Q9Y7V1"/>
<dbReference type="BioGRID" id="275399">
    <property type="interactions" value="7"/>
</dbReference>
<dbReference type="iPTMnet" id="Q9Y7V1"/>
<dbReference type="PaxDb" id="4896-SPCC645.12c.1"/>
<dbReference type="EnsemblFungi" id="SPCC645.12c.1">
    <property type="protein sequence ID" value="SPCC645.12c.1:pep"/>
    <property type="gene ID" value="SPCC645.12c"/>
</dbReference>
<dbReference type="KEGG" id="spo:2538818"/>
<dbReference type="PomBase" id="SPCC645.12c"/>
<dbReference type="VEuPathDB" id="FungiDB:SPCC645.12c"/>
<dbReference type="HOGENOM" id="CLU_1378853_0_0_1"/>
<dbReference type="InParanoid" id="Q9Y7V1"/>
<dbReference type="OMA" id="PREHISQ"/>
<dbReference type="PRO" id="PR:Q9Y7V1"/>
<dbReference type="Proteomes" id="UP000002485">
    <property type="component" value="Chromosome III"/>
</dbReference>
<dbReference type="GO" id="GO:0005634">
    <property type="term" value="C:nucleus"/>
    <property type="evidence" value="ECO:0007005"/>
    <property type="project" value="PomBase"/>
</dbReference>
<comment type="subcellular location">
    <subcellularLocation>
        <location evidence="2">Nucleus</location>
    </subcellularLocation>
</comment>
<accession>Q9Y7V1</accession>
<proteinExistence type="predicted"/>
<feature type="chain" id="PRO_0000303994" description="Uncharacterized protein C645.12c">
    <location>
        <begin position="1"/>
        <end position="198"/>
    </location>
</feature>
<feature type="region of interest" description="Disordered" evidence="1">
    <location>
        <begin position="15"/>
        <end position="69"/>
    </location>
</feature>
<feature type="region of interest" description="Disordered" evidence="1">
    <location>
        <begin position="172"/>
        <end position="198"/>
    </location>
</feature>
<feature type="compositionally biased region" description="Basic and acidic residues" evidence="1">
    <location>
        <begin position="37"/>
        <end position="49"/>
    </location>
</feature>
<feature type="compositionally biased region" description="Basic and acidic residues" evidence="1">
    <location>
        <begin position="56"/>
        <end position="69"/>
    </location>
</feature>
<feature type="compositionally biased region" description="Low complexity" evidence="1">
    <location>
        <begin position="176"/>
        <end position="186"/>
    </location>
</feature>
<feature type="compositionally biased region" description="Acidic residues" evidence="1">
    <location>
        <begin position="187"/>
        <end position="198"/>
    </location>
</feature>
<evidence type="ECO:0000256" key="1">
    <source>
        <dbReference type="SAM" id="MobiDB-lite"/>
    </source>
</evidence>
<evidence type="ECO:0000269" key="2">
    <source>
    </source>
</evidence>
<gene>
    <name type="ORF">SPCC645.12c</name>
</gene>
<name>YCHC_SCHPO</name>